<protein>
    <recommendedName>
        <fullName>Pilin</fullName>
    </recommendedName>
</protein>
<evidence type="ECO:0000250" key="1"/>
<evidence type="ECO:0000255" key="2"/>
<evidence type="ECO:0000305" key="3"/>
<organism>
    <name type="scientific">Escherichia coli</name>
    <dbReference type="NCBI Taxonomy" id="562"/>
    <lineage>
        <taxon>Bacteria</taxon>
        <taxon>Pseudomonadati</taxon>
        <taxon>Pseudomonadota</taxon>
        <taxon>Gammaproteobacteria</taxon>
        <taxon>Enterobacterales</taxon>
        <taxon>Enterobacteriaceae</taxon>
        <taxon>Escherichia</taxon>
    </lineage>
</organism>
<sequence length="119" mass="12707">MNAVLSVQGASAPVKKKSFFSKFTRLNMLRLARAVIPAAVLMMFFPQLAMAAQGQDLMASGNTTVKATFGKDSSVVKWVVLAEVLVGAVMYMMTKNVKFLAGFAIISVFIAVVMAVVGL</sequence>
<reference key="1">
    <citation type="journal article" date="1984" name="J. Bacteriol.">
        <title>Localization, cloning, and sequence determination of the conjugative plasmid ColB2 pilin gene.</title>
        <authorList>
            <person name="Finlay B.B."/>
            <person name="Frost L.S."/>
            <person name="Paranchych W."/>
        </authorList>
    </citation>
    <scope>NUCLEOTIDE SEQUENCE [GENOMIC DNA]</scope>
</reference>
<dbReference type="EMBL" id="K02667">
    <property type="protein sequence ID" value="AAB05355.1"/>
    <property type="molecule type" value="Genomic_DNA"/>
</dbReference>
<dbReference type="PIR" id="I40630">
    <property type="entry name" value="I40630"/>
</dbReference>
<dbReference type="SMR" id="P14496"/>
<dbReference type="GO" id="GO:0005576">
    <property type="term" value="C:extracellular region"/>
    <property type="evidence" value="ECO:0007669"/>
    <property type="project" value="UniProtKB-SubCell"/>
</dbReference>
<dbReference type="GO" id="GO:0005886">
    <property type="term" value="C:plasma membrane"/>
    <property type="evidence" value="ECO:0007669"/>
    <property type="project" value="UniProtKB-SubCell"/>
</dbReference>
<dbReference type="InterPro" id="IPR008873">
    <property type="entry name" value="TraA"/>
</dbReference>
<dbReference type="NCBIfam" id="NF010294">
    <property type="entry name" value="PRK13734.1"/>
    <property type="match status" value="1"/>
</dbReference>
<dbReference type="NCBIfam" id="TIGR02758">
    <property type="entry name" value="TraA_TIGR"/>
    <property type="match status" value="1"/>
</dbReference>
<dbReference type="Pfam" id="PF05513">
    <property type="entry name" value="TraA"/>
    <property type="match status" value="1"/>
</dbReference>
<keyword id="KW-0007">Acetylation</keyword>
<keyword id="KW-0997">Cell inner membrane</keyword>
<keyword id="KW-1003">Cell membrane</keyword>
<keyword id="KW-0184">Conjugation</keyword>
<keyword id="KW-0472">Membrane</keyword>
<keyword id="KW-0614">Plasmid</keyword>
<keyword id="KW-0964">Secreted</keyword>
<keyword id="KW-0812">Transmembrane</keyword>
<keyword id="KW-1133">Transmembrane helix</keyword>
<geneLocation type="plasmid">
    <name>IncFII ColB2</name>
</geneLocation>
<proteinExistence type="inferred from homology"/>
<name>PIL7_ECOLX</name>
<gene>
    <name type="primary">traA</name>
</gene>
<accession>P14496</accession>
<feature type="propeptide" id="PRO_0000024496" description="Leader peptide; cleaved by LepB" evidence="1">
    <location>
        <begin position="1"/>
        <end position="51"/>
    </location>
</feature>
<feature type="chain" id="PRO_0000024497" description="Pilin">
    <location>
        <begin position="52"/>
        <end position="119"/>
    </location>
</feature>
<feature type="topological domain" description="Periplasmic" evidence="1">
    <location>
        <begin position="1"/>
        <end position="73"/>
    </location>
</feature>
<feature type="transmembrane region" description="Helical" evidence="2">
    <location>
        <begin position="74"/>
        <end position="94"/>
    </location>
</feature>
<feature type="topological domain" description="Cytoplasmic" evidence="1">
    <location>
        <begin position="95"/>
        <end position="98"/>
    </location>
</feature>
<feature type="transmembrane region" description="Helical" evidence="2">
    <location>
        <begin position="99"/>
        <end position="119"/>
    </location>
</feature>
<feature type="modified residue" description="N-acetylalanine" evidence="1">
    <location>
        <position position="52"/>
    </location>
</feature>
<comment type="function">
    <text evidence="1">Propilin is the precursor of the pilus subunit, pilin, that forms conjugative pili, the filamentous surface appendages required for cell-to-cell contact during the earlier stages of bacterial conjugation, and that retract after contact is established. Mature pilin is assembled with the help of TraQ and TraX (By similarity).</text>
</comment>
<comment type="subunit">
    <text evidence="1">Monomer. Interacts with itself to form filaments; also interacts with TraQ (By similarity).</text>
</comment>
<comment type="subcellular location">
    <subcellularLocation>
        <location>Cell inner membrane</location>
        <topology>Multi-pass membrane protein</topology>
    </subcellularLocation>
    <subcellularLocation>
        <location evidence="1">Secreted</location>
    </subcellularLocation>
    <text evidence="1">Propilin is directed to the inner membrane, where it is cleaved and acetylated. Mature pilin forms filaments that are secreted to form the conjugative pilus (By similarity).</text>
</comment>
<comment type="similarity">
    <text evidence="3">Belongs to the TraA family.</text>
</comment>